<keyword id="KW-0687">Ribonucleoprotein</keyword>
<keyword id="KW-0689">Ribosomal protein</keyword>
<keyword id="KW-0694">RNA-binding</keyword>
<keyword id="KW-0699">rRNA-binding</keyword>
<dbReference type="EMBL" id="CP000969">
    <property type="protein sequence ID" value="ACB08426.1"/>
    <property type="molecule type" value="Genomic_DNA"/>
</dbReference>
<dbReference type="RefSeq" id="WP_012310297.1">
    <property type="nucleotide sequence ID" value="NC_010483.1"/>
</dbReference>
<dbReference type="SMR" id="B1LCG8"/>
<dbReference type="KEGG" id="trq:TRQ2_0064"/>
<dbReference type="HOGENOM" id="CLU_078938_3_0_0"/>
<dbReference type="Proteomes" id="UP000001687">
    <property type="component" value="Chromosome"/>
</dbReference>
<dbReference type="GO" id="GO:1990904">
    <property type="term" value="C:ribonucleoprotein complex"/>
    <property type="evidence" value="ECO:0007669"/>
    <property type="project" value="UniProtKB-KW"/>
</dbReference>
<dbReference type="GO" id="GO:0005840">
    <property type="term" value="C:ribosome"/>
    <property type="evidence" value="ECO:0007669"/>
    <property type="project" value="UniProtKB-KW"/>
</dbReference>
<dbReference type="GO" id="GO:0019843">
    <property type="term" value="F:rRNA binding"/>
    <property type="evidence" value="ECO:0007669"/>
    <property type="project" value="UniProtKB-UniRule"/>
</dbReference>
<dbReference type="GO" id="GO:0003735">
    <property type="term" value="F:structural constituent of ribosome"/>
    <property type="evidence" value="ECO:0007669"/>
    <property type="project" value="InterPro"/>
</dbReference>
<dbReference type="GO" id="GO:0006412">
    <property type="term" value="P:translation"/>
    <property type="evidence" value="ECO:0007669"/>
    <property type="project" value="UniProtKB-UniRule"/>
</dbReference>
<dbReference type="FunFam" id="3.40.5.10:FF:000002">
    <property type="entry name" value="50S ribosomal protein L9"/>
    <property type="match status" value="1"/>
</dbReference>
<dbReference type="Gene3D" id="3.10.430.100">
    <property type="entry name" value="Ribosomal protein L9, C-terminal domain"/>
    <property type="match status" value="1"/>
</dbReference>
<dbReference type="Gene3D" id="3.40.5.10">
    <property type="entry name" value="Ribosomal protein L9, N-terminal domain"/>
    <property type="match status" value="1"/>
</dbReference>
<dbReference type="HAMAP" id="MF_00503">
    <property type="entry name" value="Ribosomal_bL9"/>
    <property type="match status" value="1"/>
</dbReference>
<dbReference type="InterPro" id="IPR000244">
    <property type="entry name" value="Ribosomal_bL9"/>
</dbReference>
<dbReference type="InterPro" id="IPR009027">
    <property type="entry name" value="Ribosomal_bL9/RNase_H1_N"/>
</dbReference>
<dbReference type="InterPro" id="IPR020594">
    <property type="entry name" value="Ribosomal_bL9_bac/chp"/>
</dbReference>
<dbReference type="InterPro" id="IPR020069">
    <property type="entry name" value="Ribosomal_bL9_C"/>
</dbReference>
<dbReference type="InterPro" id="IPR036791">
    <property type="entry name" value="Ribosomal_bL9_C_sf"/>
</dbReference>
<dbReference type="InterPro" id="IPR020070">
    <property type="entry name" value="Ribosomal_bL9_N"/>
</dbReference>
<dbReference type="InterPro" id="IPR036935">
    <property type="entry name" value="Ribosomal_bL9_N_sf"/>
</dbReference>
<dbReference type="NCBIfam" id="TIGR00158">
    <property type="entry name" value="L9"/>
    <property type="match status" value="1"/>
</dbReference>
<dbReference type="PANTHER" id="PTHR21368">
    <property type="entry name" value="50S RIBOSOMAL PROTEIN L9"/>
    <property type="match status" value="1"/>
</dbReference>
<dbReference type="Pfam" id="PF03948">
    <property type="entry name" value="Ribosomal_L9_C"/>
    <property type="match status" value="1"/>
</dbReference>
<dbReference type="Pfam" id="PF01281">
    <property type="entry name" value="Ribosomal_L9_N"/>
    <property type="match status" value="1"/>
</dbReference>
<dbReference type="SUPFAM" id="SSF55658">
    <property type="entry name" value="L9 N-domain-like"/>
    <property type="match status" value="1"/>
</dbReference>
<dbReference type="SUPFAM" id="SSF55653">
    <property type="entry name" value="Ribosomal protein L9 C-domain"/>
    <property type="match status" value="1"/>
</dbReference>
<dbReference type="PROSITE" id="PS00651">
    <property type="entry name" value="RIBOSOMAL_L9"/>
    <property type="match status" value="1"/>
</dbReference>
<proteinExistence type="inferred from homology"/>
<reference key="1">
    <citation type="journal article" date="2011" name="J. Bacteriol.">
        <title>Genome sequence of Thermotoga sp. strain RQ2, a hyperthermophilic bacterium isolated from a geothermally heated region of the seafloor near Ribeira Quente, the Azores.</title>
        <authorList>
            <person name="Swithers K.S."/>
            <person name="DiPippo J.L."/>
            <person name="Bruce D.C."/>
            <person name="Detter C."/>
            <person name="Tapia R."/>
            <person name="Han S."/>
            <person name="Saunders E."/>
            <person name="Goodwin L.A."/>
            <person name="Han J."/>
            <person name="Woyke T."/>
            <person name="Pitluck S."/>
            <person name="Pennacchio L."/>
            <person name="Nolan M."/>
            <person name="Mikhailova N."/>
            <person name="Lykidis A."/>
            <person name="Land M.L."/>
            <person name="Brettin T."/>
            <person name="Stetter K.O."/>
            <person name="Nelson K.E."/>
            <person name="Gogarten J.P."/>
            <person name="Noll K.M."/>
        </authorList>
    </citation>
    <scope>NUCLEOTIDE SEQUENCE [LARGE SCALE GENOMIC DNA]</scope>
    <source>
        <strain>RQ2</strain>
    </source>
</reference>
<gene>
    <name evidence="1" type="primary">rplI</name>
    <name type="ordered locus">TRQ2_0064</name>
</gene>
<evidence type="ECO:0000255" key="1">
    <source>
        <dbReference type="HAMAP-Rule" id="MF_00503"/>
    </source>
</evidence>
<evidence type="ECO:0000305" key="2"/>
<feature type="chain" id="PRO_1000126987" description="Large ribosomal subunit protein bL9">
    <location>
        <begin position="1"/>
        <end position="149"/>
    </location>
</feature>
<organism>
    <name type="scientific">Thermotoga sp. (strain RQ2)</name>
    <dbReference type="NCBI Taxonomy" id="126740"/>
    <lineage>
        <taxon>Bacteria</taxon>
        <taxon>Thermotogati</taxon>
        <taxon>Thermotogota</taxon>
        <taxon>Thermotogae</taxon>
        <taxon>Thermotogales</taxon>
        <taxon>Thermotogaceae</taxon>
        <taxon>Thermotoga</taxon>
    </lineage>
</organism>
<sequence>MKVILLRDVPKIGKKGEIKEVSDGYARNYLIPRGFAKEYTEGLERAIKHEKEIEKRKKEREREESEKILKELKKRTHVVKVKAGEGGKIFGAVTAATLAEEISKTTGLKLDKRWFKLDKPIKELGEYSLEVSLPGGVKDTIKIRVEREE</sequence>
<name>RL9_THESQ</name>
<protein>
    <recommendedName>
        <fullName evidence="1">Large ribosomal subunit protein bL9</fullName>
    </recommendedName>
    <alternativeName>
        <fullName evidence="2">50S ribosomal protein L9</fullName>
    </alternativeName>
</protein>
<comment type="function">
    <text evidence="1">Binds to the 23S rRNA.</text>
</comment>
<comment type="similarity">
    <text evidence="1">Belongs to the bacterial ribosomal protein bL9 family.</text>
</comment>
<accession>B1LCG8</accession>